<accession>B0Z5D0</accession>
<protein>
    <recommendedName>
        <fullName evidence="1">Small ribosomal subunit protein uS2c</fullName>
    </recommendedName>
    <alternativeName>
        <fullName>30S ribosomal protein S2, chloroplastic</fullName>
    </alternativeName>
</protein>
<feature type="chain" id="PRO_0000352141" description="Small ribosomal subunit protein uS2c">
    <location>
        <begin position="1"/>
        <end position="236"/>
    </location>
</feature>
<name>RR2_OENPA</name>
<reference key="1">
    <citation type="journal article" date="2008" name="Nucleic Acids Res.">
        <title>The complete nucleotide sequences of the five genetically distinct plastid genomes of Oenothera, subsection Oenothera: I. Sequence evaluation and plastome evolution.</title>
        <authorList>
            <person name="Greiner S."/>
            <person name="Wang X."/>
            <person name="Rauwolf U."/>
            <person name="Silber M.V."/>
            <person name="Mayer K."/>
            <person name="Meurer J."/>
            <person name="Haberer G."/>
            <person name="Herrmann R.G."/>
        </authorList>
    </citation>
    <scope>NUCLEOTIDE SEQUENCE [LARGE SCALE GENOMIC DNA]</scope>
    <source>
        <strain>cv. Atrovirens</strain>
    </source>
</reference>
<geneLocation type="chloroplast"/>
<dbReference type="EMBL" id="EU262891">
    <property type="protein sequence ID" value="ABX10123.1"/>
    <property type="molecule type" value="Genomic_DNA"/>
</dbReference>
<dbReference type="RefSeq" id="YP_001687453.1">
    <property type="nucleotide sequence ID" value="NC_010362.1"/>
</dbReference>
<dbReference type="SMR" id="B0Z5D0"/>
<dbReference type="GeneID" id="5955414"/>
<dbReference type="GO" id="GO:0009507">
    <property type="term" value="C:chloroplast"/>
    <property type="evidence" value="ECO:0007669"/>
    <property type="project" value="UniProtKB-SubCell"/>
</dbReference>
<dbReference type="GO" id="GO:0005763">
    <property type="term" value="C:mitochondrial small ribosomal subunit"/>
    <property type="evidence" value="ECO:0007669"/>
    <property type="project" value="TreeGrafter"/>
</dbReference>
<dbReference type="GO" id="GO:0003735">
    <property type="term" value="F:structural constituent of ribosome"/>
    <property type="evidence" value="ECO:0007669"/>
    <property type="project" value="InterPro"/>
</dbReference>
<dbReference type="GO" id="GO:0006412">
    <property type="term" value="P:translation"/>
    <property type="evidence" value="ECO:0007669"/>
    <property type="project" value="UniProtKB-UniRule"/>
</dbReference>
<dbReference type="CDD" id="cd01425">
    <property type="entry name" value="RPS2"/>
    <property type="match status" value="1"/>
</dbReference>
<dbReference type="FunFam" id="1.10.287.610:FF:000001">
    <property type="entry name" value="30S ribosomal protein S2"/>
    <property type="match status" value="1"/>
</dbReference>
<dbReference type="Gene3D" id="3.40.50.10490">
    <property type="entry name" value="Glucose-6-phosphate isomerase like protein, domain 1"/>
    <property type="match status" value="1"/>
</dbReference>
<dbReference type="Gene3D" id="1.10.287.610">
    <property type="entry name" value="Helix hairpin bin"/>
    <property type="match status" value="1"/>
</dbReference>
<dbReference type="HAMAP" id="MF_00291_B">
    <property type="entry name" value="Ribosomal_uS2_B"/>
    <property type="match status" value="1"/>
</dbReference>
<dbReference type="InterPro" id="IPR001865">
    <property type="entry name" value="Ribosomal_uS2"/>
</dbReference>
<dbReference type="InterPro" id="IPR005706">
    <property type="entry name" value="Ribosomal_uS2_bac/mit/plastid"/>
</dbReference>
<dbReference type="InterPro" id="IPR018130">
    <property type="entry name" value="Ribosomal_uS2_CS"/>
</dbReference>
<dbReference type="InterPro" id="IPR023591">
    <property type="entry name" value="Ribosomal_uS2_flav_dom_sf"/>
</dbReference>
<dbReference type="NCBIfam" id="TIGR01011">
    <property type="entry name" value="rpsB_bact"/>
    <property type="match status" value="1"/>
</dbReference>
<dbReference type="PANTHER" id="PTHR12534">
    <property type="entry name" value="30S RIBOSOMAL PROTEIN S2 PROKARYOTIC AND ORGANELLAR"/>
    <property type="match status" value="1"/>
</dbReference>
<dbReference type="PANTHER" id="PTHR12534:SF0">
    <property type="entry name" value="SMALL RIBOSOMAL SUBUNIT PROTEIN US2M"/>
    <property type="match status" value="1"/>
</dbReference>
<dbReference type="Pfam" id="PF00318">
    <property type="entry name" value="Ribosomal_S2"/>
    <property type="match status" value="1"/>
</dbReference>
<dbReference type="PRINTS" id="PR00395">
    <property type="entry name" value="RIBOSOMALS2"/>
</dbReference>
<dbReference type="SUPFAM" id="SSF52313">
    <property type="entry name" value="Ribosomal protein S2"/>
    <property type="match status" value="1"/>
</dbReference>
<dbReference type="PROSITE" id="PS00962">
    <property type="entry name" value="RIBOSOMAL_S2_1"/>
    <property type="match status" value="1"/>
</dbReference>
<dbReference type="PROSITE" id="PS00963">
    <property type="entry name" value="RIBOSOMAL_S2_2"/>
    <property type="match status" value="1"/>
</dbReference>
<sequence>MTRRYWNINLEEMMEAGVHFGHGIKKWNPRMAPYIYANRKGIHITNLTKTARFLAEACDLVFDAASRGRQFLIVGTKKQAAALVARAAIKARCHYVNKKWLGGMLTNWSTTETRLHQFRDLRTEQKTGRLNRLPKRDAAILKRQLSHLQTYLGGIKYMTGLPDIVIILDQQEEYTALRECITLGIPTICLIDTDCDPDLADLPIPANDDAMASIRLILNKLVFAICEGRSSSIRNP</sequence>
<evidence type="ECO:0000305" key="1"/>
<comment type="subcellular location">
    <subcellularLocation>
        <location>Plastid</location>
        <location>Chloroplast</location>
    </subcellularLocation>
</comment>
<comment type="similarity">
    <text evidence="1">Belongs to the universal ribosomal protein uS2 family.</text>
</comment>
<gene>
    <name type="primary">rps2</name>
</gene>
<keyword id="KW-0150">Chloroplast</keyword>
<keyword id="KW-0934">Plastid</keyword>
<keyword id="KW-0687">Ribonucleoprotein</keyword>
<keyword id="KW-0689">Ribosomal protein</keyword>
<proteinExistence type="inferred from homology"/>
<organism>
    <name type="scientific">Oenothera parviflora</name>
    <name type="common">Small-flowered evening primrose</name>
    <name type="synonym">Oenothera cruciata</name>
    <dbReference type="NCBI Taxonomy" id="482429"/>
    <lineage>
        <taxon>Eukaryota</taxon>
        <taxon>Viridiplantae</taxon>
        <taxon>Streptophyta</taxon>
        <taxon>Embryophyta</taxon>
        <taxon>Tracheophyta</taxon>
        <taxon>Spermatophyta</taxon>
        <taxon>Magnoliopsida</taxon>
        <taxon>eudicotyledons</taxon>
        <taxon>Gunneridae</taxon>
        <taxon>Pentapetalae</taxon>
        <taxon>rosids</taxon>
        <taxon>malvids</taxon>
        <taxon>Myrtales</taxon>
        <taxon>Onagraceae</taxon>
        <taxon>Onagroideae</taxon>
        <taxon>Onagreae</taxon>
        <taxon>Oenothera</taxon>
    </lineage>
</organism>